<organism>
    <name type="scientific">Staphylococcus epidermidis</name>
    <dbReference type="NCBI Taxonomy" id="1282"/>
    <lineage>
        <taxon>Bacteria</taxon>
        <taxon>Bacillati</taxon>
        <taxon>Bacillota</taxon>
        <taxon>Bacilli</taxon>
        <taxon>Bacillales</taxon>
        <taxon>Staphylococcaceae</taxon>
        <taxon>Staphylococcus</taxon>
    </lineage>
</organism>
<name>SSAA_STAEP</name>
<reference key="1">
    <citation type="journal article" date="2000" name="FEMS Immunol. Med. Microbiol.">
        <title>Identification of a novel antigen from Staphylococcus epidermidis.</title>
        <authorList>
            <person name="Lang S."/>
            <person name="Livesley M.A."/>
            <person name="Lambert P.A."/>
            <person name="Littler W.A."/>
            <person name="Elliott T.S."/>
        </authorList>
    </citation>
    <scope>NUCLEOTIDE SEQUENCE [GENOMIC DNA]</scope>
    <scope>FUNCTION</scope>
    <source>
        <strain>ATCC 14990 / DSM 20044 / CIP 81.55 / NCTC 11047</strain>
    </source>
</reference>
<protein>
    <recommendedName>
        <fullName>Staphylococcal secretory antigen SsaA</fullName>
    </recommendedName>
</protein>
<sequence>MKKIATATIATAGIATFAFAHHDAQAAEQNNDGYNPNDPYSYSYTYTIDAEGNYHYTWKGNWSPDRVNTSYNYNNYNNYNYYGYNNYSNYNNYSNYNNYNNYQSNNTQSQRTTQPTGGLGASYSTSSSNVHVTTTSAPSSNGVSLSNARSASGNLYTSGQCTYYVFDRVGGKIGSTWGNANNWANAAARSGYTVNNSPAKGAILQTSQGAYGHVAYVEGVNSNGSIRVSEMNYGHGAGVVTSRTISASQAASYNYIH</sequence>
<evidence type="ECO:0000255" key="1"/>
<evidence type="ECO:0000255" key="2">
    <source>
        <dbReference type="PROSITE-ProRule" id="PRU00048"/>
    </source>
</evidence>
<evidence type="ECO:0000256" key="3">
    <source>
        <dbReference type="SAM" id="MobiDB-lite"/>
    </source>
</evidence>
<evidence type="ECO:0000269" key="4">
    <source>
    </source>
</evidence>
<dbReference type="EMBL" id="AF162275">
    <property type="protein sequence ID" value="AAF80452.1"/>
    <property type="molecule type" value="Genomic_DNA"/>
</dbReference>
<dbReference type="RefSeq" id="WP_002440903.1">
    <property type="nucleotide sequence ID" value="NZ_WLVA01000001.1"/>
</dbReference>
<dbReference type="SMR" id="Q9KJT6"/>
<dbReference type="PATRIC" id="fig|1282.1161.peg.979"/>
<dbReference type="OMA" id="WSPERFN"/>
<dbReference type="GO" id="GO:0005576">
    <property type="term" value="C:extracellular region"/>
    <property type="evidence" value="ECO:0007669"/>
    <property type="project" value="UniProtKB-SubCell"/>
</dbReference>
<dbReference type="Gene3D" id="3.90.1720.10">
    <property type="entry name" value="endopeptidase domain like (from Nostoc punctiforme)"/>
    <property type="match status" value="1"/>
</dbReference>
<dbReference type="InterPro" id="IPR007921">
    <property type="entry name" value="CHAP_dom"/>
</dbReference>
<dbReference type="InterPro" id="IPR038765">
    <property type="entry name" value="Papain-like_cys_pep_sf"/>
</dbReference>
<dbReference type="Pfam" id="PF05257">
    <property type="entry name" value="CHAP"/>
    <property type="match status" value="1"/>
</dbReference>
<dbReference type="SUPFAM" id="SSF54001">
    <property type="entry name" value="Cysteine proteinases"/>
    <property type="match status" value="1"/>
</dbReference>
<dbReference type="PROSITE" id="PS50911">
    <property type="entry name" value="CHAP"/>
    <property type="match status" value="1"/>
</dbReference>
<accession>Q9KJT6</accession>
<feature type="signal peptide" evidence="1">
    <location>
        <begin position="1"/>
        <end position="26"/>
    </location>
</feature>
<feature type="chain" id="PRO_0000045320" description="Staphylococcal secretory antigen SsaA">
    <location>
        <begin position="27"/>
        <end position="257"/>
    </location>
</feature>
<feature type="repeat" description="1">
    <location>
        <begin position="73"/>
        <end position="75"/>
    </location>
</feature>
<feature type="repeat" description="2">
    <location>
        <begin position="76"/>
        <end position="78"/>
    </location>
</feature>
<feature type="repeat" description="3">
    <location>
        <begin position="84"/>
        <end position="86"/>
    </location>
</feature>
<feature type="repeat" description="4">
    <location>
        <begin position="87"/>
        <end position="89"/>
    </location>
</feature>
<feature type="repeat" description="5">
    <location>
        <begin position="90"/>
        <end position="92"/>
    </location>
</feature>
<feature type="repeat" description="6">
    <location>
        <begin position="93"/>
        <end position="95"/>
    </location>
</feature>
<feature type="repeat" description="7">
    <location>
        <begin position="96"/>
        <end position="98"/>
    </location>
</feature>
<feature type="repeat" description="8">
    <location>
        <begin position="99"/>
        <end position="101"/>
    </location>
</feature>
<feature type="domain" description="Peptidase C51" evidence="2">
    <location>
        <begin position="136"/>
        <end position="257"/>
    </location>
</feature>
<feature type="region of interest" description="8 X 3 AA repeats of Y-[NS]-N">
    <location>
        <begin position="73"/>
        <end position="101"/>
    </location>
</feature>
<feature type="region of interest" description="Disordered" evidence="3">
    <location>
        <begin position="101"/>
        <end position="144"/>
    </location>
</feature>
<feature type="compositionally biased region" description="Polar residues" evidence="3">
    <location>
        <begin position="107"/>
        <end position="116"/>
    </location>
</feature>
<feature type="compositionally biased region" description="Low complexity" evidence="3">
    <location>
        <begin position="122"/>
        <end position="136"/>
    </location>
</feature>
<comment type="function">
    <text evidence="4">Not known; immunogenic protein expressed during sepsis and particularly during episodes of infective endocarditis.</text>
</comment>
<comment type="subcellular location">
    <subcellularLocation>
        <location>Secreted</location>
    </subcellularLocation>
</comment>
<keyword id="KW-0677">Repeat</keyword>
<keyword id="KW-0964">Secreted</keyword>
<keyword id="KW-0732">Signal</keyword>
<keyword id="KW-0843">Virulence</keyword>
<proteinExistence type="inferred from homology"/>
<gene>
    <name type="primary">ssaA</name>
</gene>